<reference key="1">
    <citation type="journal article" date="1991" name="Plant Physiol.">
        <title>Nucleotide sequence and spatial expression pattern of a drought- and abscisic acid-induced gene of tomato.</title>
        <authorList>
            <person name="Plant A.L."/>
            <person name="Cohen A."/>
            <person name="Bray E.A."/>
        </authorList>
    </citation>
    <scope>NUCLEOTIDE SEQUENCE [MRNA]</scope>
    <scope>INDUCTION</scope>
    <source>
        <strain>cv. Ailsa Craig</strain>
    </source>
</reference>
<organism>
    <name type="scientific">Solanum lycopersicum</name>
    <name type="common">Tomato</name>
    <name type="synonym">Lycopersicon esculentum</name>
    <dbReference type="NCBI Taxonomy" id="4081"/>
    <lineage>
        <taxon>Eukaryota</taxon>
        <taxon>Viridiplantae</taxon>
        <taxon>Streptophyta</taxon>
        <taxon>Embryophyta</taxon>
        <taxon>Tracheophyta</taxon>
        <taxon>Spermatophyta</taxon>
        <taxon>Magnoliopsida</taxon>
        <taxon>eudicotyledons</taxon>
        <taxon>Gunneridae</taxon>
        <taxon>Pentapetalae</taxon>
        <taxon>asterids</taxon>
        <taxon>lamiids</taxon>
        <taxon>Solanales</taxon>
        <taxon>Solanaceae</taxon>
        <taxon>Solanoideae</taxon>
        <taxon>Solaneae</taxon>
        <taxon>Solanum</taxon>
        <taxon>Solanum subgen. Lycopersicon</taxon>
    </lineage>
</organism>
<proteinExistence type="evidence at transcript level"/>
<comment type="function">
    <text>Plant non-specific lipid-transfer proteins transfer phospholipids as well as galactolipids across membranes. May play a role in wax or cutin deposition in the cell walls of expanding epidermal cells and certain secretory tissues.</text>
</comment>
<comment type="induction">
    <text evidence="3">By abscisic acid (ABA) and drought stress.</text>
</comment>
<comment type="similarity">
    <text evidence="4">Belongs to the plant LTP family.</text>
</comment>
<feature type="signal peptide" evidence="2">
    <location>
        <begin position="1"/>
        <end position="23"/>
    </location>
</feature>
<feature type="chain" id="PRO_0000018387" description="Non-specific lipid-transfer protein 2">
    <location>
        <begin position="24"/>
        <end position="114"/>
    </location>
</feature>
<feature type="disulfide bond" evidence="1">
    <location>
        <begin position="27"/>
        <end position="73"/>
    </location>
</feature>
<feature type="disulfide bond" evidence="1">
    <location>
        <begin position="37"/>
        <end position="50"/>
    </location>
</feature>
<feature type="disulfide bond" evidence="1">
    <location>
        <begin position="51"/>
        <end position="96"/>
    </location>
</feature>
<feature type="disulfide bond" evidence="1">
    <location>
        <begin position="71"/>
        <end position="110"/>
    </location>
</feature>
<protein>
    <recommendedName>
        <fullName>Non-specific lipid-transfer protein 2</fullName>
        <shortName>LTP 2</shortName>
    </recommendedName>
</protein>
<name>NLTP2_SOLLC</name>
<sequence length="114" mass="11485">MEMFGKIACFVVFCMVVVAPHAESLSCGEVTSGLAPCLPYLEGRGPLGGCCGGVKGLLGAAKTPEDRKTACTCLKSAANSIKGIDTGKAAGLPGVCGVNIPYKISPSTDCSTVQ</sequence>
<dbReference type="EMBL" id="U81996">
    <property type="protein sequence ID" value="AAB42069.1"/>
    <property type="molecule type" value="mRNA"/>
</dbReference>
<dbReference type="PIR" id="T07626">
    <property type="entry name" value="T07626"/>
</dbReference>
<dbReference type="RefSeq" id="NP_001233953.1">
    <property type="nucleotide sequence ID" value="NM_001247024.2"/>
</dbReference>
<dbReference type="SMR" id="P93224"/>
<dbReference type="FunCoup" id="P93224">
    <property type="interactions" value="1581"/>
</dbReference>
<dbReference type="STRING" id="4081.P93224"/>
<dbReference type="Allergome" id="1488">
    <property type="allergen name" value="Sola l 3"/>
</dbReference>
<dbReference type="Allergome" id="3359">
    <property type="allergen name" value="Sola l 3.0101"/>
</dbReference>
<dbReference type="PaxDb" id="4081-Solyc10g075090.1.1"/>
<dbReference type="EnsemblPlants" id="Solyc10g075090.2.1">
    <property type="protein sequence ID" value="Solyc10g075090.2.1"/>
    <property type="gene ID" value="Solyc10g075090.2"/>
</dbReference>
<dbReference type="GeneID" id="544034"/>
<dbReference type="Gramene" id="Solyc10g075090.2.1">
    <property type="protein sequence ID" value="Solyc10g075090.2.1"/>
    <property type="gene ID" value="Solyc10g075090.2"/>
</dbReference>
<dbReference type="KEGG" id="sly:544034"/>
<dbReference type="eggNOG" id="ENOG502S4CI">
    <property type="taxonomic scope" value="Eukaryota"/>
</dbReference>
<dbReference type="InParanoid" id="P93224"/>
<dbReference type="OMA" id="WPPEREM"/>
<dbReference type="OrthoDB" id="1890443at2759"/>
<dbReference type="Proteomes" id="UP000004994">
    <property type="component" value="Chromosome 10"/>
</dbReference>
<dbReference type="ExpressionAtlas" id="P93224">
    <property type="expression patterns" value="baseline and differential"/>
</dbReference>
<dbReference type="GO" id="GO:0008289">
    <property type="term" value="F:lipid binding"/>
    <property type="evidence" value="ECO:0007669"/>
    <property type="project" value="UniProtKB-KW"/>
</dbReference>
<dbReference type="GO" id="GO:0006869">
    <property type="term" value="P:lipid transport"/>
    <property type="evidence" value="ECO:0007669"/>
    <property type="project" value="InterPro"/>
</dbReference>
<dbReference type="CDD" id="cd01960">
    <property type="entry name" value="nsLTP1"/>
    <property type="match status" value="1"/>
</dbReference>
<dbReference type="Gene3D" id="1.10.110.10">
    <property type="entry name" value="Plant lipid-transfer and hydrophobic proteins"/>
    <property type="match status" value="1"/>
</dbReference>
<dbReference type="InterPro" id="IPR036312">
    <property type="entry name" value="Bifun_inhib/LTP/seed_sf"/>
</dbReference>
<dbReference type="InterPro" id="IPR016140">
    <property type="entry name" value="Bifunc_inhib/LTP/seed_store"/>
</dbReference>
<dbReference type="InterPro" id="IPR000528">
    <property type="entry name" value="Plant_nsLTP"/>
</dbReference>
<dbReference type="PANTHER" id="PTHR33076">
    <property type="entry name" value="NON-SPECIFIC LIPID-TRANSFER PROTEIN 2-RELATED"/>
    <property type="match status" value="1"/>
</dbReference>
<dbReference type="Pfam" id="PF00234">
    <property type="entry name" value="Tryp_alpha_amyl"/>
    <property type="match status" value="1"/>
</dbReference>
<dbReference type="PRINTS" id="PR00382">
    <property type="entry name" value="LIPIDTRNSFER"/>
</dbReference>
<dbReference type="SMART" id="SM00499">
    <property type="entry name" value="AAI"/>
    <property type="match status" value="1"/>
</dbReference>
<dbReference type="SUPFAM" id="SSF47699">
    <property type="entry name" value="Bifunctional inhibitor/lipid-transfer protein/seed storage 2S albumin"/>
    <property type="match status" value="1"/>
</dbReference>
<dbReference type="PROSITE" id="PS00597">
    <property type="entry name" value="PLANT_LTP"/>
    <property type="match status" value="1"/>
</dbReference>
<evidence type="ECO:0000250" key="1"/>
<evidence type="ECO:0000255" key="2"/>
<evidence type="ECO:0000269" key="3">
    <source>
    </source>
</evidence>
<evidence type="ECO:0000305" key="4"/>
<accession>P93224</accession>
<keyword id="KW-1015">Disulfide bond</keyword>
<keyword id="KW-0446">Lipid-binding</keyword>
<keyword id="KW-1185">Reference proteome</keyword>
<keyword id="KW-0732">Signal</keyword>
<keyword id="KW-0346">Stress response</keyword>
<keyword id="KW-0813">Transport</keyword>
<gene>
    <name type="primary">LE16</name>
</gene>